<organism>
    <name type="scientific">Pongo abelii</name>
    <name type="common">Sumatran orangutan</name>
    <name type="synonym">Pongo pygmaeus abelii</name>
    <dbReference type="NCBI Taxonomy" id="9601"/>
    <lineage>
        <taxon>Eukaryota</taxon>
        <taxon>Metazoa</taxon>
        <taxon>Chordata</taxon>
        <taxon>Craniata</taxon>
        <taxon>Vertebrata</taxon>
        <taxon>Euteleostomi</taxon>
        <taxon>Mammalia</taxon>
        <taxon>Eutheria</taxon>
        <taxon>Euarchontoglires</taxon>
        <taxon>Primates</taxon>
        <taxon>Haplorrhini</taxon>
        <taxon>Catarrhini</taxon>
        <taxon>Hominidae</taxon>
        <taxon>Pongo</taxon>
    </lineage>
</organism>
<name>VMA21_PONAB</name>
<gene>
    <name evidence="3" type="primary">VMA21</name>
</gene>
<reference key="1">
    <citation type="submission" date="2004-11" db="EMBL/GenBank/DDBJ databases">
        <authorList>
            <consortium name="The German cDNA consortium"/>
        </authorList>
    </citation>
    <scope>NUCLEOTIDE SEQUENCE [LARGE SCALE MRNA]</scope>
    <source>
        <tissue>Brain cortex</tissue>
    </source>
</reference>
<dbReference type="EMBL" id="CR857791">
    <property type="protein sequence ID" value="CAH90054.1"/>
    <property type="molecule type" value="mRNA"/>
</dbReference>
<dbReference type="RefSeq" id="NP_001124983.1">
    <property type="nucleotide sequence ID" value="NM_001131511.1"/>
</dbReference>
<dbReference type="SMR" id="Q5RDV3"/>
<dbReference type="FunCoup" id="Q5RDV3">
    <property type="interactions" value="1243"/>
</dbReference>
<dbReference type="STRING" id="9601.ENSPPYP00000023305"/>
<dbReference type="Ensembl" id="ENSPPYT00000024281.3">
    <property type="protein sequence ID" value="ENSPPYP00000023305.2"/>
    <property type="gene ID" value="ENSPPYG00000020820.3"/>
</dbReference>
<dbReference type="GeneID" id="100171856"/>
<dbReference type="KEGG" id="pon:100171856"/>
<dbReference type="CTD" id="203547"/>
<dbReference type="eggNOG" id="KOG4783">
    <property type="taxonomic scope" value="Eukaryota"/>
</dbReference>
<dbReference type="GeneTree" id="ENSGT00390000017980"/>
<dbReference type="HOGENOM" id="CLU_143588_1_0_1"/>
<dbReference type="InParanoid" id="Q5RDV3"/>
<dbReference type="OMA" id="PYFRGNE"/>
<dbReference type="OrthoDB" id="160405at2759"/>
<dbReference type="TreeFam" id="TF314021"/>
<dbReference type="Proteomes" id="UP000001595">
    <property type="component" value="Chromosome X"/>
</dbReference>
<dbReference type="GO" id="GO:0005789">
    <property type="term" value="C:endoplasmic reticulum membrane"/>
    <property type="evidence" value="ECO:0007669"/>
    <property type="project" value="UniProtKB-SubCell"/>
</dbReference>
<dbReference type="GO" id="GO:0033116">
    <property type="term" value="C:endoplasmic reticulum-Golgi intermediate compartment membrane"/>
    <property type="evidence" value="ECO:0007669"/>
    <property type="project" value="UniProtKB-SubCell"/>
</dbReference>
<dbReference type="GO" id="GO:0012507">
    <property type="term" value="C:ER to Golgi transport vesicle membrane"/>
    <property type="evidence" value="ECO:0007669"/>
    <property type="project" value="UniProtKB-SubCell"/>
</dbReference>
<dbReference type="GO" id="GO:0070072">
    <property type="term" value="P:vacuolar proton-transporting V-type ATPase complex assembly"/>
    <property type="evidence" value="ECO:0007669"/>
    <property type="project" value="UniProtKB-UniRule"/>
</dbReference>
<dbReference type="HAMAP" id="MF_03058">
    <property type="entry name" value="VMA21"/>
    <property type="match status" value="1"/>
</dbReference>
<dbReference type="InterPro" id="IPR019013">
    <property type="entry name" value="Vma21"/>
</dbReference>
<dbReference type="PANTHER" id="PTHR31792">
    <property type="entry name" value="VACUOLAR ATPASE ASSEMBLY INTEGRAL MEMBRANE PROTEIN VMA21"/>
    <property type="match status" value="1"/>
</dbReference>
<dbReference type="PANTHER" id="PTHR31792:SF3">
    <property type="entry name" value="VACUOLAR ATPASE ASSEMBLY INTEGRAL MEMBRANE PROTEIN VMA21"/>
    <property type="match status" value="1"/>
</dbReference>
<dbReference type="Pfam" id="PF09446">
    <property type="entry name" value="VMA21"/>
    <property type="match status" value="1"/>
</dbReference>
<sequence length="101" mass="11354">MERPDKAALNALQPPEFRNESSLASTLKTLLFFTALMITVPIGLYFTTKSYIFEGALGMSNRDSYFYAAIVAVVAVHVVLALFVYVAWNEGSRQWREGKQD</sequence>
<feature type="chain" id="PRO_0000331501" description="Vacuolar ATPase assembly integral membrane protein VMA21">
    <location>
        <begin position="1"/>
        <end position="101"/>
    </location>
</feature>
<feature type="topological domain" description="Cytoplasmic" evidence="3">
    <location>
        <begin position="1"/>
        <end position="25"/>
    </location>
</feature>
<feature type="transmembrane region" description="Helical" evidence="3">
    <location>
        <begin position="26"/>
        <end position="46"/>
    </location>
</feature>
<feature type="topological domain" description="Lumenal" evidence="3">
    <location>
        <begin position="47"/>
        <end position="65"/>
    </location>
</feature>
<feature type="transmembrane region" description="Helical" evidence="3">
    <location>
        <begin position="66"/>
        <end position="86"/>
    </location>
</feature>
<feature type="topological domain" description="Cytoplasmic" evidence="3">
    <location>
        <begin position="87"/>
        <end position="101"/>
    </location>
</feature>
<accession>Q5RDV3</accession>
<evidence type="ECO:0000250" key="1">
    <source>
        <dbReference type="UniProtKB" id="Q3ZAQ7"/>
    </source>
</evidence>
<evidence type="ECO:0000250" key="2">
    <source>
        <dbReference type="UniProtKB" id="Q78T54"/>
    </source>
</evidence>
<evidence type="ECO:0000255" key="3">
    <source>
        <dbReference type="HAMAP-Rule" id="MF_03058"/>
    </source>
</evidence>
<protein>
    <recommendedName>
        <fullName evidence="3">Vacuolar ATPase assembly integral membrane protein VMA21</fullName>
    </recommendedName>
</protein>
<comment type="function">
    <text evidence="2">Required for the assembly of the V0 complex of the vacuolar ATPase (V-ATPase) in the endoplasmic reticulum.</text>
</comment>
<comment type="subunit">
    <text evidence="1 3">Associates with the V0 complex of the vacuolar ATPase (V-ATPase) (By similarity). Interacts with ATP6AP2 (By similarity).</text>
</comment>
<comment type="subcellular location">
    <subcellularLocation>
        <location evidence="3">Endoplasmic reticulum membrane</location>
        <topology evidence="3">Multi-pass membrane protein</topology>
    </subcellularLocation>
    <subcellularLocation>
        <location evidence="3">Endoplasmic reticulum-Golgi intermediate compartment membrane</location>
        <topology evidence="3">Multi-pass membrane protein</topology>
    </subcellularLocation>
    <subcellularLocation>
        <location evidence="3">Cytoplasmic vesicle</location>
        <location evidence="3">COPII-coated vesicle membrane</location>
        <topology evidence="3">Multi-pass membrane protein</topology>
    </subcellularLocation>
</comment>
<comment type="similarity">
    <text evidence="3">Belongs to the VMA21 family.</text>
</comment>
<proteinExistence type="inferred from homology"/>
<keyword id="KW-0968">Cytoplasmic vesicle</keyword>
<keyword id="KW-0256">Endoplasmic reticulum</keyword>
<keyword id="KW-0472">Membrane</keyword>
<keyword id="KW-1185">Reference proteome</keyword>
<keyword id="KW-0812">Transmembrane</keyword>
<keyword id="KW-1133">Transmembrane helix</keyword>